<feature type="chain" id="PRO_1000079241" description="Chaperone protein DnaK">
    <location>
        <begin position="1"/>
        <end position="638"/>
    </location>
</feature>
<feature type="region of interest" description="Disordered" evidence="2">
    <location>
        <begin position="603"/>
        <end position="638"/>
    </location>
</feature>
<feature type="compositionally biased region" description="Low complexity" evidence="2">
    <location>
        <begin position="603"/>
        <end position="620"/>
    </location>
</feature>
<feature type="modified residue" description="Phosphothreonine; by autocatalysis" evidence="1">
    <location>
        <position position="199"/>
    </location>
</feature>
<organism>
    <name type="scientific">Salmonella arizonae (strain ATCC BAA-731 / CDC346-86 / RSK2980)</name>
    <dbReference type="NCBI Taxonomy" id="41514"/>
    <lineage>
        <taxon>Bacteria</taxon>
        <taxon>Pseudomonadati</taxon>
        <taxon>Pseudomonadota</taxon>
        <taxon>Gammaproteobacteria</taxon>
        <taxon>Enterobacterales</taxon>
        <taxon>Enterobacteriaceae</taxon>
        <taxon>Salmonella</taxon>
    </lineage>
</organism>
<evidence type="ECO:0000255" key="1">
    <source>
        <dbReference type="HAMAP-Rule" id="MF_00332"/>
    </source>
</evidence>
<evidence type="ECO:0000256" key="2">
    <source>
        <dbReference type="SAM" id="MobiDB-lite"/>
    </source>
</evidence>
<sequence length="638" mass="69319">MGKIIGIDLGTTNSCVAIMDGMQARVLENAEGDRTTPSIIAYTQDGETLVGQPAKRQAVTNPQNTLFAIKRLIGRRFQDEEVQRDVSIMPYKIIEADNGDAWLDVKGQKMAPPQISAEVLKKMKKTAEDYLGEPVTEAVITVPAYFNDAQRQATKDAGRIAGLEVKRIINEPTAAALAYGLDKEVGNRTIAVYDLGGGTFDISIIEIDEVDGEKTFEVLATNGDTHLGGEDFDTRLINYLVDEFKKDQGIDLRNDPLAMQRLKEAAEKAKIELSSAQQTDVNLPYITADATGPKHMNIKVTRAKLESLVEDLVNRSIEPLKVALQDAGLSVSDINDVILVGGQTRMPMVQKKVAEFFGKEPRKDVNPDEAVAIGAAVQGGVLTGDVKDVLLLDVTPLSLGIETMGGVMTPLISKNTTIPTKHSQVFSTAEDNQSAVTIHVLQGERKRASDNKSLGQFNLDGINPAPRGMPQIEVTFDIDADGILHVSAKDKNSGKEQKITIKASSGLNEEEIQKMVRDAEANAESDRKFEELVQTRNQGDHLLHSTRKQVEEAGDKLPADDKTAIESALSALETALKGEDKAAIEAKMQELAQVSQKLMEIAQQQHAQQQAGSADASANNAKDDDVVDAEFEEVKDKK</sequence>
<comment type="function">
    <text evidence="1">Acts as a chaperone.</text>
</comment>
<comment type="induction">
    <text evidence="1">By stress conditions e.g. heat shock.</text>
</comment>
<comment type="similarity">
    <text evidence="1">Belongs to the heat shock protein 70 family.</text>
</comment>
<reference key="1">
    <citation type="submission" date="2007-11" db="EMBL/GenBank/DDBJ databases">
        <authorList>
            <consortium name="The Salmonella enterica serovar Arizonae Genome Sequencing Project"/>
            <person name="McClelland M."/>
            <person name="Sanderson E.K."/>
            <person name="Porwollik S."/>
            <person name="Spieth J."/>
            <person name="Clifton W.S."/>
            <person name="Fulton R."/>
            <person name="Chunyan W."/>
            <person name="Wollam A."/>
            <person name="Shah N."/>
            <person name="Pepin K."/>
            <person name="Bhonagiri V."/>
            <person name="Nash W."/>
            <person name="Johnson M."/>
            <person name="Thiruvilangam P."/>
            <person name="Wilson R."/>
        </authorList>
    </citation>
    <scope>NUCLEOTIDE SEQUENCE [LARGE SCALE GENOMIC DNA]</scope>
    <source>
        <strain>ATCC BAA-731 / CDC346-86 / RSK2980</strain>
    </source>
</reference>
<protein>
    <recommendedName>
        <fullName evidence="1">Chaperone protein DnaK</fullName>
    </recommendedName>
    <alternativeName>
        <fullName evidence="1">HSP70</fullName>
    </alternativeName>
    <alternativeName>
        <fullName evidence="1">Heat shock 70 kDa protein</fullName>
    </alternativeName>
    <alternativeName>
        <fullName evidence="1">Heat shock protein 70</fullName>
    </alternativeName>
</protein>
<accession>A9MR77</accession>
<proteinExistence type="inferred from homology"/>
<dbReference type="EMBL" id="CP000880">
    <property type="protein sequence ID" value="ABX22825.1"/>
    <property type="molecule type" value="Genomic_DNA"/>
</dbReference>
<dbReference type="SMR" id="A9MR77"/>
<dbReference type="STRING" id="41514.SARI_02980"/>
<dbReference type="KEGG" id="ses:SARI_02980"/>
<dbReference type="HOGENOM" id="CLU_005965_2_1_6"/>
<dbReference type="Proteomes" id="UP000002084">
    <property type="component" value="Chromosome"/>
</dbReference>
<dbReference type="GO" id="GO:0005524">
    <property type="term" value="F:ATP binding"/>
    <property type="evidence" value="ECO:0007669"/>
    <property type="project" value="UniProtKB-UniRule"/>
</dbReference>
<dbReference type="GO" id="GO:0140662">
    <property type="term" value="F:ATP-dependent protein folding chaperone"/>
    <property type="evidence" value="ECO:0007669"/>
    <property type="project" value="InterPro"/>
</dbReference>
<dbReference type="GO" id="GO:0051082">
    <property type="term" value="F:unfolded protein binding"/>
    <property type="evidence" value="ECO:0007669"/>
    <property type="project" value="InterPro"/>
</dbReference>
<dbReference type="CDD" id="cd10234">
    <property type="entry name" value="ASKHA_NBD_HSP70_DnaK-like"/>
    <property type="match status" value="1"/>
</dbReference>
<dbReference type="FunFam" id="2.60.34.10:FF:000014">
    <property type="entry name" value="Chaperone protein DnaK HSP70"/>
    <property type="match status" value="1"/>
</dbReference>
<dbReference type="FunFam" id="3.30.30.30:FF:000003">
    <property type="entry name" value="Heat shock protein 9"/>
    <property type="match status" value="1"/>
</dbReference>
<dbReference type="FunFam" id="1.20.1270.10:FF:000001">
    <property type="entry name" value="Molecular chaperone DnaK"/>
    <property type="match status" value="1"/>
</dbReference>
<dbReference type="FunFam" id="3.30.420.40:FF:000004">
    <property type="entry name" value="Molecular chaperone DnaK"/>
    <property type="match status" value="1"/>
</dbReference>
<dbReference type="FunFam" id="3.90.640.10:FF:000003">
    <property type="entry name" value="Molecular chaperone DnaK"/>
    <property type="match status" value="1"/>
</dbReference>
<dbReference type="Gene3D" id="1.20.1270.10">
    <property type="match status" value="1"/>
</dbReference>
<dbReference type="Gene3D" id="3.30.420.40">
    <property type="match status" value="2"/>
</dbReference>
<dbReference type="Gene3D" id="3.90.640.10">
    <property type="entry name" value="Actin, Chain A, domain 4"/>
    <property type="match status" value="1"/>
</dbReference>
<dbReference type="Gene3D" id="2.60.34.10">
    <property type="entry name" value="Substrate Binding Domain Of DNAk, Chain A, domain 1"/>
    <property type="match status" value="1"/>
</dbReference>
<dbReference type="HAMAP" id="MF_00332">
    <property type="entry name" value="DnaK"/>
    <property type="match status" value="1"/>
</dbReference>
<dbReference type="InterPro" id="IPR043129">
    <property type="entry name" value="ATPase_NBD"/>
</dbReference>
<dbReference type="InterPro" id="IPR012725">
    <property type="entry name" value="Chaperone_DnaK"/>
</dbReference>
<dbReference type="InterPro" id="IPR018181">
    <property type="entry name" value="Heat_shock_70_CS"/>
</dbReference>
<dbReference type="InterPro" id="IPR029048">
    <property type="entry name" value="HSP70_C_sf"/>
</dbReference>
<dbReference type="InterPro" id="IPR029047">
    <property type="entry name" value="HSP70_peptide-bd_sf"/>
</dbReference>
<dbReference type="InterPro" id="IPR013126">
    <property type="entry name" value="Hsp_70_fam"/>
</dbReference>
<dbReference type="NCBIfam" id="NF001413">
    <property type="entry name" value="PRK00290.1"/>
    <property type="match status" value="1"/>
</dbReference>
<dbReference type="NCBIfam" id="NF003520">
    <property type="entry name" value="PRK05183.1"/>
    <property type="match status" value="1"/>
</dbReference>
<dbReference type="NCBIfam" id="TIGR02350">
    <property type="entry name" value="prok_dnaK"/>
    <property type="match status" value="1"/>
</dbReference>
<dbReference type="PANTHER" id="PTHR19375">
    <property type="entry name" value="HEAT SHOCK PROTEIN 70KDA"/>
    <property type="match status" value="1"/>
</dbReference>
<dbReference type="Pfam" id="PF00012">
    <property type="entry name" value="HSP70"/>
    <property type="match status" value="1"/>
</dbReference>
<dbReference type="PRINTS" id="PR00301">
    <property type="entry name" value="HEATSHOCK70"/>
</dbReference>
<dbReference type="SUPFAM" id="SSF53067">
    <property type="entry name" value="Actin-like ATPase domain"/>
    <property type="match status" value="2"/>
</dbReference>
<dbReference type="SUPFAM" id="SSF100934">
    <property type="entry name" value="Heat shock protein 70kD (HSP70), C-terminal subdomain"/>
    <property type="match status" value="1"/>
</dbReference>
<dbReference type="SUPFAM" id="SSF100920">
    <property type="entry name" value="Heat shock protein 70kD (HSP70), peptide-binding domain"/>
    <property type="match status" value="1"/>
</dbReference>
<dbReference type="PROSITE" id="PS00297">
    <property type="entry name" value="HSP70_1"/>
    <property type="match status" value="1"/>
</dbReference>
<dbReference type="PROSITE" id="PS00329">
    <property type="entry name" value="HSP70_2"/>
    <property type="match status" value="1"/>
</dbReference>
<dbReference type="PROSITE" id="PS01036">
    <property type="entry name" value="HSP70_3"/>
    <property type="match status" value="1"/>
</dbReference>
<name>DNAK_SALAR</name>
<gene>
    <name evidence="1" type="primary">dnaK</name>
    <name type="ordered locus">SARI_02980</name>
</gene>
<keyword id="KW-0067">ATP-binding</keyword>
<keyword id="KW-0143">Chaperone</keyword>
<keyword id="KW-0547">Nucleotide-binding</keyword>
<keyword id="KW-0597">Phosphoprotein</keyword>
<keyword id="KW-1185">Reference proteome</keyword>
<keyword id="KW-0346">Stress response</keyword>